<organism>
    <name type="scientific">Clostridium botulinum (strain Okra / Type B1)</name>
    <dbReference type="NCBI Taxonomy" id="498213"/>
    <lineage>
        <taxon>Bacteria</taxon>
        <taxon>Bacillati</taxon>
        <taxon>Bacillota</taxon>
        <taxon>Clostridia</taxon>
        <taxon>Eubacteriales</taxon>
        <taxon>Clostridiaceae</taxon>
        <taxon>Clostridium</taxon>
    </lineage>
</organism>
<gene>
    <name evidence="1" type="primary">rsmH</name>
    <name type="synonym">mraW</name>
    <name type="ordered locus">CLD_3096</name>
</gene>
<sequence>MEFKHISVLLEETIDSLNIKEDGVYVDCTLGGGGHSKEILKKLSHKGKLIGIDQDTSAIKAAKEKLKDYENIIYVHNNFYNIDSILEELDIDKVDGIIMDLGVSSYQLDEASRGFSYMKDAPLDMRMNREENLSAYGVINNYEEEELFKILKNYGEEKFSRKIARFIVEKRTENPIETTGELVEIIRKAIPAKFQREGHPAKRTFQAIRIEVNKELQILNKAIEDSVNRLNKDGRLSIITFHSLEDRIVKVKFKELEKPCTCPPSFPICVCGKEPQIKIITKKPIEPSKEEKEINSRSRSAKLRVCRKI</sequence>
<reference key="1">
    <citation type="journal article" date="2007" name="PLoS ONE">
        <title>Analysis of the neurotoxin complex genes in Clostridium botulinum A1-A4 and B1 strains: BoNT/A3, /Ba4 and /B1 clusters are located within plasmids.</title>
        <authorList>
            <person name="Smith T.J."/>
            <person name="Hill K.K."/>
            <person name="Foley B.T."/>
            <person name="Detter J.C."/>
            <person name="Munk A.C."/>
            <person name="Bruce D.C."/>
            <person name="Doggett N.A."/>
            <person name="Smith L.A."/>
            <person name="Marks J.D."/>
            <person name="Xie G."/>
            <person name="Brettin T.S."/>
        </authorList>
    </citation>
    <scope>NUCLEOTIDE SEQUENCE [LARGE SCALE GENOMIC DNA]</scope>
    <source>
        <strain>Okra / Type B1</strain>
    </source>
</reference>
<comment type="function">
    <text evidence="1">Specifically methylates the N4 position of cytidine in position 1402 (C1402) of 16S rRNA.</text>
</comment>
<comment type="catalytic activity">
    <reaction evidence="1">
        <text>cytidine(1402) in 16S rRNA + S-adenosyl-L-methionine = N(4)-methylcytidine(1402) in 16S rRNA + S-adenosyl-L-homocysteine + H(+)</text>
        <dbReference type="Rhea" id="RHEA:42928"/>
        <dbReference type="Rhea" id="RHEA-COMP:10286"/>
        <dbReference type="Rhea" id="RHEA-COMP:10287"/>
        <dbReference type="ChEBI" id="CHEBI:15378"/>
        <dbReference type="ChEBI" id="CHEBI:57856"/>
        <dbReference type="ChEBI" id="CHEBI:59789"/>
        <dbReference type="ChEBI" id="CHEBI:74506"/>
        <dbReference type="ChEBI" id="CHEBI:82748"/>
        <dbReference type="EC" id="2.1.1.199"/>
    </reaction>
</comment>
<comment type="subcellular location">
    <subcellularLocation>
        <location evidence="1">Cytoplasm</location>
    </subcellularLocation>
</comment>
<comment type="similarity">
    <text evidence="1">Belongs to the methyltransferase superfamily. RsmH family.</text>
</comment>
<keyword id="KW-0963">Cytoplasm</keyword>
<keyword id="KW-0489">Methyltransferase</keyword>
<keyword id="KW-0698">rRNA processing</keyword>
<keyword id="KW-0949">S-adenosyl-L-methionine</keyword>
<keyword id="KW-0808">Transferase</keyword>
<accession>B1IKR0</accession>
<feature type="chain" id="PRO_0000386818" description="Ribosomal RNA small subunit methyltransferase H">
    <location>
        <begin position="1"/>
        <end position="309"/>
    </location>
</feature>
<feature type="binding site" evidence="1">
    <location>
        <begin position="33"/>
        <end position="35"/>
    </location>
    <ligand>
        <name>S-adenosyl-L-methionine</name>
        <dbReference type="ChEBI" id="CHEBI:59789"/>
    </ligand>
</feature>
<feature type="binding site" evidence="1">
    <location>
        <position position="53"/>
    </location>
    <ligand>
        <name>S-adenosyl-L-methionine</name>
        <dbReference type="ChEBI" id="CHEBI:59789"/>
    </ligand>
</feature>
<feature type="binding site" evidence="1">
    <location>
        <position position="79"/>
    </location>
    <ligand>
        <name>S-adenosyl-L-methionine</name>
        <dbReference type="ChEBI" id="CHEBI:59789"/>
    </ligand>
</feature>
<feature type="binding site" evidence="1">
    <location>
        <position position="100"/>
    </location>
    <ligand>
        <name>S-adenosyl-L-methionine</name>
        <dbReference type="ChEBI" id="CHEBI:59789"/>
    </ligand>
</feature>
<feature type="binding site" evidence="1">
    <location>
        <position position="107"/>
    </location>
    <ligand>
        <name>S-adenosyl-L-methionine</name>
        <dbReference type="ChEBI" id="CHEBI:59789"/>
    </ligand>
</feature>
<dbReference type="EC" id="2.1.1.199" evidence="1"/>
<dbReference type="EMBL" id="CP000939">
    <property type="protein sequence ID" value="ACA44431.1"/>
    <property type="molecule type" value="Genomic_DNA"/>
</dbReference>
<dbReference type="RefSeq" id="WP_003405799.1">
    <property type="nucleotide sequence ID" value="NC_010516.1"/>
</dbReference>
<dbReference type="SMR" id="B1IKR0"/>
<dbReference type="KEGG" id="cbb:CLD_3096"/>
<dbReference type="HOGENOM" id="CLU_038422_2_0_9"/>
<dbReference type="Proteomes" id="UP000008541">
    <property type="component" value="Chromosome"/>
</dbReference>
<dbReference type="GO" id="GO:0005737">
    <property type="term" value="C:cytoplasm"/>
    <property type="evidence" value="ECO:0007669"/>
    <property type="project" value="UniProtKB-SubCell"/>
</dbReference>
<dbReference type="GO" id="GO:0071424">
    <property type="term" value="F:rRNA (cytosine-N4-)-methyltransferase activity"/>
    <property type="evidence" value="ECO:0007669"/>
    <property type="project" value="UniProtKB-UniRule"/>
</dbReference>
<dbReference type="GO" id="GO:0070475">
    <property type="term" value="P:rRNA base methylation"/>
    <property type="evidence" value="ECO:0007669"/>
    <property type="project" value="UniProtKB-UniRule"/>
</dbReference>
<dbReference type="FunFam" id="1.10.150.170:FF:000001">
    <property type="entry name" value="Ribosomal RNA small subunit methyltransferase H"/>
    <property type="match status" value="1"/>
</dbReference>
<dbReference type="Gene3D" id="1.10.150.170">
    <property type="entry name" value="Putative methyltransferase TM0872, insert domain"/>
    <property type="match status" value="1"/>
</dbReference>
<dbReference type="Gene3D" id="3.40.50.150">
    <property type="entry name" value="Vaccinia Virus protein VP39"/>
    <property type="match status" value="1"/>
</dbReference>
<dbReference type="HAMAP" id="MF_01007">
    <property type="entry name" value="16SrRNA_methyltr_H"/>
    <property type="match status" value="1"/>
</dbReference>
<dbReference type="InterPro" id="IPR002903">
    <property type="entry name" value="RsmH"/>
</dbReference>
<dbReference type="InterPro" id="IPR023397">
    <property type="entry name" value="SAM-dep_MeTrfase_MraW_recog"/>
</dbReference>
<dbReference type="InterPro" id="IPR029063">
    <property type="entry name" value="SAM-dependent_MTases_sf"/>
</dbReference>
<dbReference type="NCBIfam" id="TIGR00006">
    <property type="entry name" value="16S rRNA (cytosine(1402)-N(4))-methyltransferase RsmH"/>
    <property type="match status" value="1"/>
</dbReference>
<dbReference type="PANTHER" id="PTHR11265:SF0">
    <property type="entry name" value="12S RRNA N4-METHYLCYTIDINE METHYLTRANSFERASE"/>
    <property type="match status" value="1"/>
</dbReference>
<dbReference type="PANTHER" id="PTHR11265">
    <property type="entry name" value="S-ADENOSYL-METHYLTRANSFERASE MRAW"/>
    <property type="match status" value="1"/>
</dbReference>
<dbReference type="Pfam" id="PF01795">
    <property type="entry name" value="Methyltransf_5"/>
    <property type="match status" value="1"/>
</dbReference>
<dbReference type="PIRSF" id="PIRSF004486">
    <property type="entry name" value="MraW"/>
    <property type="match status" value="1"/>
</dbReference>
<dbReference type="SUPFAM" id="SSF81799">
    <property type="entry name" value="Putative methyltransferase TM0872, insert domain"/>
    <property type="match status" value="1"/>
</dbReference>
<dbReference type="SUPFAM" id="SSF53335">
    <property type="entry name" value="S-adenosyl-L-methionine-dependent methyltransferases"/>
    <property type="match status" value="1"/>
</dbReference>
<name>RSMH_CLOBK</name>
<protein>
    <recommendedName>
        <fullName evidence="1">Ribosomal RNA small subunit methyltransferase H</fullName>
        <ecNumber evidence="1">2.1.1.199</ecNumber>
    </recommendedName>
    <alternativeName>
        <fullName evidence="1">16S rRNA m(4)C1402 methyltransferase</fullName>
    </alternativeName>
    <alternativeName>
        <fullName evidence="1">rRNA (cytosine-N(4)-)-methyltransferase RsmH</fullName>
    </alternativeName>
</protein>
<evidence type="ECO:0000255" key="1">
    <source>
        <dbReference type="HAMAP-Rule" id="MF_01007"/>
    </source>
</evidence>
<proteinExistence type="inferred from homology"/>